<gene>
    <name type="primary">cimap1b</name>
    <name type="synonym">odf3</name>
    <name type="synonym">odf3b</name>
    <name type="synonym">odf3l</name>
    <name type="ORF">si:dkey-238c7.9</name>
    <name type="ORF">si:dkeyp-1h4.4</name>
    <name type="ORF">zgc:63985</name>
</gene>
<name>CMA1B_DANRE</name>
<feature type="chain" id="PRO_0000299466" description="Ciliary microtubule associated protein 1B">
    <location>
        <begin position="1"/>
        <end position="257"/>
    </location>
</feature>
<feature type="repeat" description="STPGR 1">
    <location>
        <begin position="103"/>
        <end position="129"/>
    </location>
</feature>
<feature type="repeat" description="STPGR 2">
    <location>
        <begin position="182"/>
        <end position="207"/>
    </location>
</feature>
<feature type="repeat" description="STPGR 3">
    <location>
        <begin position="218"/>
        <end position="243"/>
    </location>
</feature>
<feature type="sequence conflict" description="In Ref. 1; CAM56632." evidence="2" ref="1">
    <original>A</original>
    <variation>V</variation>
    <location>
        <position position="116"/>
    </location>
</feature>
<feature type="sequence conflict" description="In Ref. 1; CAM56632 and 2; AAH54587." evidence="2" ref="1 2">
    <original>V</original>
    <variation>I</variation>
    <location>
        <position position="248"/>
    </location>
</feature>
<protein>
    <recommendedName>
        <fullName>Ciliary microtubule associated protein 1B</fullName>
    </recommendedName>
    <alternativeName>
        <fullName>Outer dense fiber of sperm tails protein 3-B</fullName>
    </alternativeName>
    <alternativeName>
        <fullName>Outer dense fiber protein 3-B</fullName>
    </alternativeName>
    <alternativeName>
        <fullName>Outer dense fiber protein 3-like</fullName>
    </alternativeName>
</protein>
<comment type="subcellular location">
    <subcellularLocation>
        <location evidence="1">Cell projection</location>
        <location evidence="1">Cilium</location>
        <location evidence="1">Flagellum</location>
    </subcellularLocation>
</comment>
<comment type="similarity">
    <text evidence="2">Belongs to the CIMAP family.</text>
</comment>
<reference key="1">
    <citation type="journal article" date="2013" name="Nature">
        <title>The zebrafish reference genome sequence and its relationship to the human genome.</title>
        <authorList>
            <person name="Howe K."/>
            <person name="Clark M.D."/>
            <person name="Torroja C.F."/>
            <person name="Torrance J."/>
            <person name="Berthelot C."/>
            <person name="Muffato M."/>
            <person name="Collins J.E."/>
            <person name="Humphray S."/>
            <person name="McLaren K."/>
            <person name="Matthews L."/>
            <person name="McLaren S."/>
            <person name="Sealy I."/>
            <person name="Caccamo M."/>
            <person name="Churcher C."/>
            <person name="Scott C."/>
            <person name="Barrett J.C."/>
            <person name="Koch R."/>
            <person name="Rauch G.J."/>
            <person name="White S."/>
            <person name="Chow W."/>
            <person name="Kilian B."/>
            <person name="Quintais L.T."/>
            <person name="Guerra-Assuncao J.A."/>
            <person name="Zhou Y."/>
            <person name="Gu Y."/>
            <person name="Yen J."/>
            <person name="Vogel J.H."/>
            <person name="Eyre T."/>
            <person name="Redmond S."/>
            <person name="Banerjee R."/>
            <person name="Chi J."/>
            <person name="Fu B."/>
            <person name="Langley E."/>
            <person name="Maguire S.F."/>
            <person name="Laird G.K."/>
            <person name="Lloyd D."/>
            <person name="Kenyon E."/>
            <person name="Donaldson S."/>
            <person name="Sehra H."/>
            <person name="Almeida-King J."/>
            <person name="Loveland J."/>
            <person name="Trevanion S."/>
            <person name="Jones M."/>
            <person name="Quail M."/>
            <person name="Willey D."/>
            <person name="Hunt A."/>
            <person name="Burton J."/>
            <person name="Sims S."/>
            <person name="McLay K."/>
            <person name="Plumb B."/>
            <person name="Davis J."/>
            <person name="Clee C."/>
            <person name="Oliver K."/>
            <person name="Clark R."/>
            <person name="Riddle C."/>
            <person name="Elliot D."/>
            <person name="Threadgold G."/>
            <person name="Harden G."/>
            <person name="Ware D."/>
            <person name="Begum S."/>
            <person name="Mortimore B."/>
            <person name="Kerry G."/>
            <person name="Heath P."/>
            <person name="Phillimore B."/>
            <person name="Tracey A."/>
            <person name="Corby N."/>
            <person name="Dunn M."/>
            <person name="Johnson C."/>
            <person name="Wood J."/>
            <person name="Clark S."/>
            <person name="Pelan S."/>
            <person name="Griffiths G."/>
            <person name="Smith M."/>
            <person name="Glithero R."/>
            <person name="Howden P."/>
            <person name="Barker N."/>
            <person name="Lloyd C."/>
            <person name="Stevens C."/>
            <person name="Harley J."/>
            <person name="Holt K."/>
            <person name="Panagiotidis G."/>
            <person name="Lovell J."/>
            <person name="Beasley H."/>
            <person name="Henderson C."/>
            <person name="Gordon D."/>
            <person name="Auger K."/>
            <person name="Wright D."/>
            <person name="Collins J."/>
            <person name="Raisen C."/>
            <person name="Dyer L."/>
            <person name="Leung K."/>
            <person name="Robertson L."/>
            <person name="Ambridge K."/>
            <person name="Leongamornlert D."/>
            <person name="McGuire S."/>
            <person name="Gilderthorp R."/>
            <person name="Griffiths C."/>
            <person name="Manthravadi D."/>
            <person name="Nichol S."/>
            <person name="Barker G."/>
            <person name="Whitehead S."/>
            <person name="Kay M."/>
            <person name="Brown J."/>
            <person name="Murnane C."/>
            <person name="Gray E."/>
            <person name="Humphries M."/>
            <person name="Sycamore N."/>
            <person name="Barker D."/>
            <person name="Saunders D."/>
            <person name="Wallis J."/>
            <person name="Babbage A."/>
            <person name="Hammond S."/>
            <person name="Mashreghi-Mohammadi M."/>
            <person name="Barr L."/>
            <person name="Martin S."/>
            <person name="Wray P."/>
            <person name="Ellington A."/>
            <person name="Matthews N."/>
            <person name="Ellwood M."/>
            <person name="Woodmansey R."/>
            <person name="Clark G."/>
            <person name="Cooper J."/>
            <person name="Tromans A."/>
            <person name="Grafham D."/>
            <person name="Skuce C."/>
            <person name="Pandian R."/>
            <person name="Andrews R."/>
            <person name="Harrison E."/>
            <person name="Kimberley A."/>
            <person name="Garnett J."/>
            <person name="Fosker N."/>
            <person name="Hall R."/>
            <person name="Garner P."/>
            <person name="Kelly D."/>
            <person name="Bird C."/>
            <person name="Palmer S."/>
            <person name="Gehring I."/>
            <person name="Berger A."/>
            <person name="Dooley C.M."/>
            <person name="Ersan-Urun Z."/>
            <person name="Eser C."/>
            <person name="Geiger H."/>
            <person name="Geisler M."/>
            <person name="Karotki L."/>
            <person name="Kirn A."/>
            <person name="Konantz J."/>
            <person name="Konantz M."/>
            <person name="Oberlander M."/>
            <person name="Rudolph-Geiger S."/>
            <person name="Teucke M."/>
            <person name="Lanz C."/>
            <person name="Raddatz G."/>
            <person name="Osoegawa K."/>
            <person name="Zhu B."/>
            <person name="Rapp A."/>
            <person name="Widaa S."/>
            <person name="Langford C."/>
            <person name="Yang F."/>
            <person name="Schuster S.C."/>
            <person name="Carter N.P."/>
            <person name="Harrow J."/>
            <person name="Ning Z."/>
            <person name="Herrero J."/>
            <person name="Searle S.M."/>
            <person name="Enright A."/>
            <person name="Geisler R."/>
            <person name="Plasterk R.H."/>
            <person name="Lee C."/>
            <person name="Westerfield M."/>
            <person name="de Jong P.J."/>
            <person name="Zon L.I."/>
            <person name="Postlethwait J.H."/>
            <person name="Nusslein-Volhard C."/>
            <person name="Hubbard T.J."/>
            <person name="Roest Crollius H."/>
            <person name="Rogers J."/>
            <person name="Stemple D.L."/>
        </authorList>
    </citation>
    <scope>NUCLEOTIDE SEQUENCE [LARGE SCALE GENOMIC DNA]</scope>
    <source>
        <strain>Tuebingen</strain>
    </source>
</reference>
<reference key="2">
    <citation type="submission" date="2003-07" db="EMBL/GenBank/DDBJ databases">
        <authorList>
            <consortium name="NIH - Zebrafish Gene Collection (ZGC) project"/>
        </authorList>
    </citation>
    <scope>NUCLEOTIDE SEQUENCE [LARGE SCALE MRNA]</scope>
    <source>
        <tissue>Kidney</tissue>
    </source>
</reference>
<organism>
    <name type="scientific">Danio rerio</name>
    <name type="common">Zebrafish</name>
    <name type="synonym">Brachydanio rerio</name>
    <dbReference type="NCBI Taxonomy" id="7955"/>
    <lineage>
        <taxon>Eukaryota</taxon>
        <taxon>Metazoa</taxon>
        <taxon>Chordata</taxon>
        <taxon>Craniata</taxon>
        <taxon>Vertebrata</taxon>
        <taxon>Euteleostomi</taxon>
        <taxon>Actinopterygii</taxon>
        <taxon>Neopterygii</taxon>
        <taxon>Teleostei</taxon>
        <taxon>Ostariophysi</taxon>
        <taxon>Cypriniformes</taxon>
        <taxon>Danionidae</taxon>
        <taxon>Danioninae</taxon>
        <taxon>Danio</taxon>
    </lineage>
</organism>
<dbReference type="EMBL" id="BX571879">
    <property type="protein sequence ID" value="CAM56632.1"/>
    <property type="molecule type" value="Genomic_DNA"/>
</dbReference>
<dbReference type="EMBL" id="CR318588">
    <property type="protein sequence ID" value="CAK11331.1"/>
    <property type="molecule type" value="Genomic_DNA"/>
</dbReference>
<dbReference type="EMBL" id="BC054587">
    <property type="protein sequence ID" value="AAH54587.1"/>
    <property type="molecule type" value="mRNA"/>
</dbReference>
<dbReference type="EMBL" id="BC163161">
    <property type="protein sequence ID" value="AAI63161.1"/>
    <property type="molecule type" value="mRNA"/>
</dbReference>
<dbReference type="EMBL" id="BC163187">
    <property type="protein sequence ID" value="AAI63187.1"/>
    <property type="molecule type" value="mRNA"/>
</dbReference>
<dbReference type="RefSeq" id="NP_956252.1">
    <property type="nucleotide sequence ID" value="NM_199958.1"/>
</dbReference>
<dbReference type="RefSeq" id="XP_005159056.1">
    <property type="nucleotide sequence ID" value="XM_005158999.3"/>
</dbReference>
<dbReference type="FunCoup" id="A3KQA5">
    <property type="interactions" value="547"/>
</dbReference>
<dbReference type="IntAct" id="A3KQA5">
    <property type="interactions" value="1"/>
</dbReference>
<dbReference type="MINT" id="A3KQA5"/>
<dbReference type="STRING" id="7955.ENSDARP00000062155"/>
<dbReference type="PaxDb" id="7955-ENSDARP00000108259"/>
<dbReference type="PeptideAtlas" id="A3KQA5"/>
<dbReference type="Ensembl" id="ENSDART00000062156">
    <property type="protein sequence ID" value="ENSDARP00000062155"/>
    <property type="gene ID" value="ENSDARG00000042396"/>
</dbReference>
<dbReference type="Ensembl" id="ENSDART00000175288">
    <property type="protein sequence ID" value="ENSDARP00000144363"/>
    <property type="gene ID" value="ENSDARG00000042396"/>
</dbReference>
<dbReference type="Ensembl" id="ENSDART00000191529">
    <property type="protein sequence ID" value="ENSDARP00000153006"/>
    <property type="gene ID" value="ENSDARG00000116899"/>
</dbReference>
<dbReference type="GeneID" id="335524"/>
<dbReference type="KEGG" id="dre:335524"/>
<dbReference type="AGR" id="ZFIN:ZDB-GENE-030131-7464"/>
<dbReference type="CTD" id="440836"/>
<dbReference type="ZFIN" id="ZDB-GENE-030131-7464">
    <property type="gene designation" value="cimap1b"/>
</dbReference>
<dbReference type="eggNOG" id="ENOG502QUIJ">
    <property type="taxonomic scope" value="Eukaryota"/>
</dbReference>
<dbReference type="HOGENOM" id="CLU_088282_1_0_1"/>
<dbReference type="InParanoid" id="A3KQA5"/>
<dbReference type="OMA" id="KWIYRSA"/>
<dbReference type="OrthoDB" id="429991at2759"/>
<dbReference type="PhylomeDB" id="A3KQA5"/>
<dbReference type="TreeFam" id="TF325804"/>
<dbReference type="PRO" id="PR:A3KQA5"/>
<dbReference type="Proteomes" id="UP000000437">
    <property type="component" value="Alternate scaffold 18"/>
</dbReference>
<dbReference type="Proteomes" id="UP000000437">
    <property type="component" value="Chromosome 18"/>
</dbReference>
<dbReference type="Bgee" id="ENSDARG00000042396">
    <property type="expression patterns" value="Expressed in testis and 12 other cell types or tissues"/>
</dbReference>
<dbReference type="ExpressionAtlas" id="A3KQA5">
    <property type="expression patterns" value="baseline and differential"/>
</dbReference>
<dbReference type="GO" id="GO:0005856">
    <property type="term" value="C:cytoskeleton"/>
    <property type="evidence" value="ECO:0000318"/>
    <property type="project" value="GO_Central"/>
</dbReference>
<dbReference type="GO" id="GO:0031514">
    <property type="term" value="C:motile cilium"/>
    <property type="evidence" value="ECO:0007669"/>
    <property type="project" value="UniProtKB-SubCell"/>
</dbReference>
<dbReference type="InterPro" id="IPR051291">
    <property type="entry name" value="CIMAP"/>
</dbReference>
<dbReference type="InterPro" id="IPR010736">
    <property type="entry name" value="SHIPPO-rpt"/>
</dbReference>
<dbReference type="PANTHER" id="PTHR21580:SF28">
    <property type="entry name" value="BOREALIN N-TERMINAL DOMAIN-CONTAINING PROTEIN-RELATED"/>
    <property type="match status" value="1"/>
</dbReference>
<dbReference type="PANTHER" id="PTHR21580">
    <property type="entry name" value="SHIPPO-1-RELATED"/>
    <property type="match status" value="1"/>
</dbReference>
<dbReference type="Pfam" id="PF07004">
    <property type="entry name" value="SHIPPO-rpt"/>
    <property type="match status" value="6"/>
</dbReference>
<keyword id="KW-0966">Cell projection</keyword>
<keyword id="KW-0969">Cilium</keyword>
<keyword id="KW-0282">Flagellum</keyword>
<keyword id="KW-1185">Reference proteome</keyword>
<keyword id="KW-0677">Repeat</keyword>
<evidence type="ECO:0000250" key="1">
    <source>
        <dbReference type="UniProtKB" id="Q920N1"/>
    </source>
</evidence>
<evidence type="ECO:0000305" key="2"/>
<sequence length="257" mass="27896">MSPVDVWVGSWRPHKPRGPIAAMYNSPGPTYALPGATGMNNHDPRMQKGPAFSFGIRHHNFHGNYSPGPGYLVPSNITRVGRDGTPAYSVYGRRKDIQPFQTPGPGSYSPENATKATYLSPPAFTLSARTKLFRNDQTPGPAAYMLPPVLGPKVVNKTSAPNVSFSGRSAIGSFHEDLRKTPGPGTYQVVDPCVYKHKGPQYSMTGRNMMPGDMTKKPGPGAHYPEMVCFTRAKAPSFSFGIRHSEYVAPTIVDGED</sequence>
<proteinExistence type="evidence at transcript level"/>
<accession>A3KQA5</accession>
<accession>B3DIK7</accession>
<accession>Q1L9G0</accession>
<accession>Q7T2D9</accession>